<accession>A5GUJ2</accession>
<comment type="catalytic activity">
    <reaction evidence="1">
        <text>(S)-4-amino-5-oxopentanoate = 5-aminolevulinate</text>
        <dbReference type="Rhea" id="RHEA:14265"/>
        <dbReference type="ChEBI" id="CHEBI:57501"/>
        <dbReference type="ChEBI" id="CHEBI:356416"/>
        <dbReference type="EC" id="5.4.3.8"/>
    </reaction>
</comment>
<comment type="cofactor">
    <cofactor evidence="1">
        <name>pyridoxal 5'-phosphate</name>
        <dbReference type="ChEBI" id="CHEBI:597326"/>
    </cofactor>
</comment>
<comment type="pathway">
    <text evidence="1">Porphyrin-containing compound metabolism; protoporphyrin-IX biosynthesis; 5-aminolevulinate from L-glutamyl-tRNA(Glu): step 2/2.</text>
</comment>
<comment type="pathway">
    <text evidence="1">Porphyrin-containing compound metabolism; chlorophyll biosynthesis.</text>
</comment>
<comment type="subunit">
    <text evidence="1">Homodimer.</text>
</comment>
<comment type="subcellular location">
    <subcellularLocation>
        <location evidence="1">Cytoplasm</location>
    </subcellularLocation>
</comment>
<comment type="similarity">
    <text evidence="1">Belongs to the class-III pyridoxal-phosphate-dependent aminotransferase family. HemL subfamily.</text>
</comment>
<dbReference type="EC" id="5.4.3.8" evidence="1"/>
<dbReference type="EMBL" id="CT978603">
    <property type="protein sequence ID" value="CAK28551.1"/>
    <property type="molecule type" value="Genomic_DNA"/>
</dbReference>
<dbReference type="SMR" id="A5GUJ2"/>
<dbReference type="STRING" id="316278.SynRCC307_1648"/>
<dbReference type="KEGG" id="syr:SynRCC307_1648"/>
<dbReference type="eggNOG" id="COG0001">
    <property type="taxonomic scope" value="Bacteria"/>
</dbReference>
<dbReference type="HOGENOM" id="CLU_016922_1_5_3"/>
<dbReference type="UniPathway" id="UPA00251">
    <property type="reaction ID" value="UER00317"/>
</dbReference>
<dbReference type="UniPathway" id="UPA00668"/>
<dbReference type="Proteomes" id="UP000001115">
    <property type="component" value="Chromosome"/>
</dbReference>
<dbReference type="GO" id="GO:0005737">
    <property type="term" value="C:cytoplasm"/>
    <property type="evidence" value="ECO:0007669"/>
    <property type="project" value="UniProtKB-SubCell"/>
</dbReference>
<dbReference type="GO" id="GO:0042286">
    <property type="term" value="F:glutamate-1-semialdehyde 2,1-aminomutase activity"/>
    <property type="evidence" value="ECO:0007669"/>
    <property type="project" value="UniProtKB-UniRule"/>
</dbReference>
<dbReference type="GO" id="GO:0030170">
    <property type="term" value="F:pyridoxal phosphate binding"/>
    <property type="evidence" value="ECO:0007669"/>
    <property type="project" value="InterPro"/>
</dbReference>
<dbReference type="GO" id="GO:0008483">
    <property type="term" value="F:transaminase activity"/>
    <property type="evidence" value="ECO:0007669"/>
    <property type="project" value="InterPro"/>
</dbReference>
<dbReference type="GO" id="GO:0015995">
    <property type="term" value="P:chlorophyll biosynthetic process"/>
    <property type="evidence" value="ECO:0007669"/>
    <property type="project" value="UniProtKB-UniRule"/>
</dbReference>
<dbReference type="GO" id="GO:0006782">
    <property type="term" value="P:protoporphyrinogen IX biosynthetic process"/>
    <property type="evidence" value="ECO:0007669"/>
    <property type="project" value="UniProtKB-UniRule"/>
</dbReference>
<dbReference type="CDD" id="cd00610">
    <property type="entry name" value="OAT_like"/>
    <property type="match status" value="1"/>
</dbReference>
<dbReference type="FunFam" id="3.40.640.10:FF:000021">
    <property type="entry name" value="Glutamate-1-semialdehyde 2,1-aminomutase"/>
    <property type="match status" value="1"/>
</dbReference>
<dbReference type="Gene3D" id="3.90.1150.10">
    <property type="entry name" value="Aspartate Aminotransferase, domain 1"/>
    <property type="match status" value="1"/>
</dbReference>
<dbReference type="Gene3D" id="3.40.640.10">
    <property type="entry name" value="Type I PLP-dependent aspartate aminotransferase-like (Major domain)"/>
    <property type="match status" value="1"/>
</dbReference>
<dbReference type="HAMAP" id="MF_00375">
    <property type="entry name" value="HemL_aminotrans_3"/>
    <property type="match status" value="1"/>
</dbReference>
<dbReference type="InterPro" id="IPR004639">
    <property type="entry name" value="4pyrrol_synth_GluAld_NH2Trfase"/>
</dbReference>
<dbReference type="InterPro" id="IPR005814">
    <property type="entry name" value="Aminotrans_3"/>
</dbReference>
<dbReference type="InterPro" id="IPR049704">
    <property type="entry name" value="Aminotrans_3_PPA_site"/>
</dbReference>
<dbReference type="InterPro" id="IPR015424">
    <property type="entry name" value="PyrdxlP-dep_Trfase"/>
</dbReference>
<dbReference type="InterPro" id="IPR015421">
    <property type="entry name" value="PyrdxlP-dep_Trfase_major"/>
</dbReference>
<dbReference type="InterPro" id="IPR015422">
    <property type="entry name" value="PyrdxlP-dep_Trfase_small"/>
</dbReference>
<dbReference type="NCBIfam" id="TIGR00713">
    <property type="entry name" value="hemL"/>
    <property type="match status" value="1"/>
</dbReference>
<dbReference type="NCBIfam" id="NF000818">
    <property type="entry name" value="PRK00062.1"/>
    <property type="match status" value="1"/>
</dbReference>
<dbReference type="PANTHER" id="PTHR43713">
    <property type="entry name" value="GLUTAMATE-1-SEMIALDEHYDE 2,1-AMINOMUTASE"/>
    <property type="match status" value="1"/>
</dbReference>
<dbReference type="PANTHER" id="PTHR43713:SF3">
    <property type="entry name" value="GLUTAMATE-1-SEMIALDEHYDE 2,1-AMINOMUTASE 1, CHLOROPLASTIC-RELATED"/>
    <property type="match status" value="1"/>
</dbReference>
<dbReference type="Pfam" id="PF00202">
    <property type="entry name" value="Aminotran_3"/>
    <property type="match status" value="1"/>
</dbReference>
<dbReference type="SUPFAM" id="SSF53383">
    <property type="entry name" value="PLP-dependent transferases"/>
    <property type="match status" value="1"/>
</dbReference>
<dbReference type="PROSITE" id="PS00600">
    <property type="entry name" value="AA_TRANSFER_CLASS_3"/>
    <property type="match status" value="1"/>
</dbReference>
<evidence type="ECO:0000255" key="1">
    <source>
        <dbReference type="HAMAP-Rule" id="MF_00375"/>
    </source>
</evidence>
<protein>
    <recommendedName>
        <fullName evidence="1">Glutamate-1-semialdehyde 2,1-aminomutase</fullName>
        <shortName evidence="1">GSA</shortName>
        <ecNumber evidence="1">5.4.3.8</ecNumber>
    </recommendedName>
    <alternativeName>
        <fullName evidence="1">Glutamate-1-semialdehyde aminotransferase</fullName>
        <shortName evidence="1">GSA-AT</shortName>
    </alternativeName>
</protein>
<organism>
    <name type="scientific">Synechococcus sp. (strain RCC307)</name>
    <dbReference type="NCBI Taxonomy" id="316278"/>
    <lineage>
        <taxon>Bacteria</taxon>
        <taxon>Bacillati</taxon>
        <taxon>Cyanobacteriota</taxon>
        <taxon>Cyanophyceae</taxon>
        <taxon>Synechococcales</taxon>
        <taxon>Synechococcaceae</taxon>
        <taxon>Synechococcus</taxon>
    </lineage>
</organism>
<proteinExistence type="inferred from homology"/>
<reference key="1">
    <citation type="submission" date="2006-05" db="EMBL/GenBank/DDBJ databases">
        <authorList>
            <consortium name="Genoscope"/>
        </authorList>
    </citation>
    <scope>NUCLEOTIDE SEQUENCE [LARGE SCALE GENOMIC DNA]</scope>
    <source>
        <strain>RCC307</strain>
    </source>
</reference>
<feature type="chain" id="PRO_0000382386" description="Glutamate-1-semialdehyde 2,1-aminomutase">
    <location>
        <begin position="1"/>
        <end position="434"/>
    </location>
</feature>
<feature type="modified residue" description="N6-(pyridoxal phosphate)lysine" evidence="1">
    <location>
        <position position="273"/>
    </location>
</feature>
<sequence length="434" mass="45953">MVTAAALNTSRSDALFTAAQQLMPGGVNSPVRAFRSVGGQPIVFDRVEGAYAWDVDGNRYIDYIGSWGPAICGHANPEVIEALQQALTKGTSFGAPCALENTLAEMVINAVPSVEMVRFVNSGTEACMAVLRLMRAYTGREKVIKFEGCYHGHADMFLVKAGSGVATLGLPDSPGVPSSTTANTLTAPYNDLEAVKALFAENPDSISGVILEPVVGNAGFIPPDFGFLEGLREITREYGALLVFDEVMTGFRISYGGAQARFGITPDLTTMGKVIGGGLPVGAYGGRKDIMEMVAPAGPMYQAGTLSGNPLAMTAGIKTLELLKRPGTYEKLEATTKRLAEGIQEAAKAAGLPVCGNSISAMFGFFLCDGPVRNFEEAKANDSERFAKLHRAMLERGVYLAPSSFEAGFTSLAHSDADIDATLEAFRESFQLIA</sequence>
<name>GSA_SYNR3</name>
<keyword id="KW-0149">Chlorophyll biosynthesis</keyword>
<keyword id="KW-0963">Cytoplasm</keyword>
<keyword id="KW-0413">Isomerase</keyword>
<keyword id="KW-0627">Porphyrin biosynthesis</keyword>
<keyword id="KW-0663">Pyridoxal phosphate</keyword>
<keyword id="KW-1185">Reference proteome</keyword>
<gene>
    <name evidence="1" type="primary">hemL</name>
    <name type="ordered locus">SynRCC307_1648</name>
</gene>